<sequence length="275" mass="30499">MAIRKIGIASRCDRPEVLQMVRDIIAHFYSKVQIYVSTATADVLDIEGTPVERMRDKGVELIISVGGDGTVLRNIAKMKDPLPVLGINMGTLGFLVDVEPEDAIETIEEVLYGFSYLERMRVDVFLNGEMLETATNEVAVMSAKPAKIIQFEVYVNDCLLDEMRADGVVFATPTGSTAYAMSAGGPIINPRVNAIVVVPVAPFKLSARPWVIPSDSEITVKLSDHKKEAVIAIDGQKSYRIRPDDVVKLKKSKYPARFVRISDTCFYERVQRKLS</sequence>
<accession>Q8TKQ5</accession>
<reference key="1">
    <citation type="journal article" date="2002" name="Genome Res.">
        <title>The genome of Methanosarcina acetivorans reveals extensive metabolic and physiological diversity.</title>
        <authorList>
            <person name="Galagan J.E."/>
            <person name="Nusbaum C."/>
            <person name="Roy A."/>
            <person name="Endrizzi M.G."/>
            <person name="Macdonald P."/>
            <person name="FitzHugh W."/>
            <person name="Calvo S."/>
            <person name="Engels R."/>
            <person name="Smirnov S."/>
            <person name="Atnoor D."/>
            <person name="Brown A."/>
            <person name="Allen N."/>
            <person name="Naylor J."/>
            <person name="Stange-Thomann N."/>
            <person name="DeArellano K."/>
            <person name="Johnson R."/>
            <person name="Linton L."/>
            <person name="McEwan P."/>
            <person name="McKernan K."/>
            <person name="Talamas J."/>
            <person name="Tirrell A."/>
            <person name="Ye W."/>
            <person name="Zimmer A."/>
            <person name="Barber R.D."/>
            <person name="Cann I."/>
            <person name="Graham D.E."/>
            <person name="Grahame D.A."/>
            <person name="Guss A.M."/>
            <person name="Hedderich R."/>
            <person name="Ingram-Smith C."/>
            <person name="Kuettner H.C."/>
            <person name="Krzycki J.A."/>
            <person name="Leigh J.A."/>
            <person name="Li W."/>
            <person name="Liu J."/>
            <person name="Mukhopadhyay B."/>
            <person name="Reeve J.N."/>
            <person name="Smith K."/>
            <person name="Springer T.A."/>
            <person name="Umayam L.A."/>
            <person name="White O."/>
            <person name="White R.H."/>
            <person name="de Macario E.C."/>
            <person name="Ferry J.G."/>
            <person name="Jarrell K.F."/>
            <person name="Jing H."/>
            <person name="Macario A.J.L."/>
            <person name="Paulsen I.T."/>
            <person name="Pritchett M."/>
            <person name="Sowers K.R."/>
            <person name="Swanson R.V."/>
            <person name="Zinder S.H."/>
            <person name="Lander E."/>
            <person name="Metcalf W.W."/>
            <person name="Birren B."/>
        </authorList>
    </citation>
    <scope>NUCLEOTIDE SEQUENCE [LARGE SCALE GENOMIC DNA]</scope>
    <source>
        <strain>ATCC 35395 / DSM 2834 / JCM 12185 / C2A</strain>
    </source>
</reference>
<proteinExistence type="inferred from homology"/>
<dbReference type="EC" id="2.7.1.23" evidence="1"/>
<dbReference type="EMBL" id="AE010299">
    <property type="protein sequence ID" value="AAM06712.1"/>
    <property type="molecule type" value="Genomic_DNA"/>
</dbReference>
<dbReference type="RefSeq" id="WP_011023273.1">
    <property type="nucleotide sequence ID" value="NC_003552.1"/>
</dbReference>
<dbReference type="SMR" id="Q8TKQ5"/>
<dbReference type="STRING" id="188937.MA_3343"/>
<dbReference type="EnsemblBacteria" id="AAM06712">
    <property type="protein sequence ID" value="AAM06712"/>
    <property type="gene ID" value="MA_3343"/>
</dbReference>
<dbReference type="GeneID" id="1475236"/>
<dbReference type="KEGG" id="mac:MA_3343"/>
<dbReference type="HOGENOM" id="CLU_008831_0_2_2"/>
<dbReference type="InParanoid" id="Q8TKQ5"/>
<dbReference type="OrthoDB" id="77798at2157"/>
<dbReference type="PhylomeDB" id="Q8TKQ5"/>
<dbReference type="Proteomes" id="UP000002487">
    <property type="component" value="Chromosome"/>
</dbReference>
<dbReference type="GO" id="GO:0005737">
    <property type="term" value="C:cytoplasm"/>
    <property type="evidence" value="ECO:0007669"/>
    <property type="project" value="UniProtKB-SubCell"/>
</dbReference>
<dbReference type="GO" id="GO:0005524">
    <property type="term" value="F:ATP binding"/>
    <property type="evidence" value="ECO:0007669"/>
    <property type="project" value="UniProtKB-KW"/>
</dbReference>
<dbReference type="GO" id="GO:0046872">
    <property type="term" value="F:metal ion binding"/>
    <property type="evidence" value="ECO:0007669"/>
    <property type="project" value="UniProtKB-UniRule"/>
</dbReference>
<dbReference type="GO" id="GO:0003951">
    <property type="term" value="F:NAD+ kinase activity"/>
    <property type="evidence" value="ECO:0000318"/>
    <property type="project" value="GO_Central"/>
</dbReference>
<dbReference type="GO" id="GO:0019674">
    <property type="term" value="P:NAD metabolic process"/>
    <property type="evidence" value="ECO:0007669"/>
    <property type="project" value="InterPro"/>
</dbReference>
<dbReference type="GO" id="GO:0006741">
    <property type="term" value="P:NADP biosynthetic process"/>
    <property type="evidence" value="ECO:0000318"/>
    <property type="project" value="GO_Central"/>
</dbReference>
<dbReference type="FunFam" id="2.60.200.30:FF:000009">
    <property type="entry name" value="Poly(P)/ATP NAD kinase"/>
    <property type="match status" value="1"/>
</dbReference>
<dbReference type="Gene3D" id="3.40.50.10330">
    <property type="entry name" value="Probable inorganic polyphosphate/atp-NAD kinase, domain 1"/>
    <property type="match status" value="1"/>
</dbReference>
<dbReference type="Gene3D" id="2.60.200.30">
    <property type="entry name" value="Probable inorganic polyphosphate/atp-NAD kinase, domain 2"/>
    <property type="match status" value="1"/>
</dbReference>
<dbReference type="HAMAP" id="MF_00361">
    <property type="entry name" value="NAD_kinase"/>
    <property type="match status" value="1"/>
</dbReference>
<dbReference type="InterPro" id="IPR017438">
    <property type="entry name" value="ATP-NAD_kinase_N"/>
</dbReference>
<dbReference type="InterPro" id="IPR017437">
    <property type="entry name" value="ATP-NAD_kinase_PpnK-typ_C"/>
</dbReference>
<dbReference type="InterPro" id="IPR016064">
    <property type="entry name" value="NAD/diacylglycerol_kinase_sf"/>
</dbReference>
<dbReference type="InterPro" id="IPR002504">
    <property type="entry name" value="NADK"/>
</dbReference>
<dbReference type="PANTHER" id="PTHR20275:SF43">
    <property type="entry name" value="BIFUNCTIONAL NADP PHOSPHATASE_NAD KINASE"/>
    <property type="match status" value="1"/>
</dbReference>
<dbReference type="PANTHER" id="PTHR20275">
    <property type="entry name" value="NAD KINASE"/>
    <property type="match status" value="1"/>
</dbReference>
<dbReference type="Pfam" id="PF01513">
    <property type="entry name" value="NAD_kinase"/>
    <property type="match status" value="1"/>
</dbReference>
<dbReference type="Pfam" id="PF20143">
    <property type="entry name" value="NAD_kinase_C"/>
    <property type="match status" value="1"/>
</dbReference>
<dbReference type="SUPFAM" id="SSF111331">
    <property type="entry name" value="NAD kinase/diacylglycerol kinase-like"/>
    <property type="match status" value="1"/>
</dbReference>
<name>NADK_METAC</name>
<evidence type="ECO:0000255" key="1">
    <source>
        <dbReference type="HAMAP-Rule" id="MF_00361"/>
    </source>
</evidence>
<feature type="chain" id="PRO_0000120699" description="NAD kinase">
    <location>
        <begin position="1"/>
        <end position="275"/>
    </location>
</feature>
<feature type="active site" description="Proton acceptor" evidence="1">
    <location>
        <position position="68"/>
    </location>
</feature>
<feature type="binding site" evidence="1">
    <location>
        <begin position="68"/>
        <end position="69"/>
    </location>
    <ligand>
        <name>NAD(+)</name>
        <dbReference type="ChEBI" id="CHEBI:57540"/>
    </ligand>
</feature>
<feature type="binding site" evidence="1">
    <location>
        <position position="73"/>
    </location>
    <ligand>
        <name>NAD(+)</name>
        <dbReference type="ChEBI" id="CHEBI:57540"/>
    </ligand>
</feature>
<feature type="binding site" evidence="1">
    <location>
        <begin position="136"/>
        <end position="137"/>
    </location>
    <ligand>
        <name>NAD(+)</name>
        <dbReference type="ChEBI" id="CHEBI:57540"/>
    </ligand>
</feature>
<feature type="binding site" evidence="1">
    <location>
        <position position="147"/>
    </location>
    <ligand>
        <name>NAD(+)</name>
        <dbReference type="ChEBI" id="CHEBI:57540"/>
    </ligand>
</feature>
<feature type="binding site" evidence="1">
    <location>
        <position position="164"/>
    </location>
    <ligand>
        <name>NAD(+)</name>
        <dbReference type="ChEBI" id="CHEBI:57540"/>
    </ligand>
</feature>
<feature type="binding site" evidence="1">
    <location>
        <position position="166"/>
    </location>
    <ligand>
        <name>NAD(+)</name>
        <dbReference type="ChEBI" id="CHEBI:57540"/>
    </ligand>
</feature>
<feature type="binding site" evidence="1">
    <location>
        <begin position="177"/>
        <end position="182"/>
    </location>
    <ligand>
        <name>NAD(+)</name>
        <dbReference type="ChEBI" id="CHEBI:57540"/>
    </ligand>
</feature>
<feature type="binding site" evidence="1">
    <location>
        <position position="201"/>
    </location>
    <ligand>
        <name>NAD(+)</name>
        <dbReference type="ChEBI" id="CHEBI:57540"/>
    </ligand>
</feature>
<feature type="binding site" evidence="1">
    <location>
        <position position="236"/>
    </location>
    <ligand>
        <name>NAD(+)</name>
        <dbReference type="ChEBI" id="CHEBI:57540"/>
    </ligand>
</feature>
<keyword id="KW-0067">ATP-binding</keyword>
<keyword id="KW-0963">Cytoplasm</keyword>
<keyword id="KW-0418">Kinase</keyword>
<keyword id="KW-0520">NAD</keyword>
<keyword id="KW-0521">NADP</keyword>
<keyword id="KW-0547">Nucleotide-binding</keyword>
<keyword id="KW-1185">Reference proteome</keyword>
<keyword id="KW-0808">Transferase</keyword>
<gene>
    <name evidence="1" type="primary">nadK</name>
    <name type="ordered locus">MA_3343</name>
</gene>
<comment type="function">
    <text evidence="1">Involved in the regulation of the intracellular balance of NAD and NADP, and is a key enzyme in the biosynthesis of NADP. Catalyzes specifically the phosphorylation on 2'-hydroxyl of the adenosine moiety of NAD to yield NADP.</text>
</comment>
<comment type="catalytic activity">
    <reaction evidence="1">
        <text>NAD(+) + ATP = ADP + NADP(+) + H(+)</text>
        <dbReference type="Rhea" id="RHEA:18629"/>
        <dbReference type="ChEBI" id="CHEBI:15378"/>
        <dbReference type="ChEBI" id="CHEBI:30616"/>
        <dbReference type="ChEBI" id="CHEBI:57540"/>
        <dbReference type="ChEBI" id="CHEBI:58349"/>
        <dbReference type="ChEBI" id="CHEBI:456216"/>
        <dbReference type="EC" id="2.7.1.23"/>
    </reaction>
</comment>
<comment type="cofactor">
    <cofactor evidence="1">
        <name>a divalent metal cation</name>
        <dbReference type="ChEBI" id="CHEBI:60240"/>
    </cofactor>
</comment>
<comment type="subcellular location">
    <subcellularLocation>
        <location evidence="1">Cytoplasm</location>
    </subcellularLocation>
</comment>
<comment type="similarity">
    <text evidence="1">Belongs to the NAD kinase family.</text>
</comment>
<organism>
    <name type="scientific">Methanosarcina acetivorans (strain ATCC 35395 / DSM 2834 / JCM 12185 / C2A)</name>
    <dbReference type="NCBI Taxonomy" id="188937"/>
    <lineage>
        <taxon>Archaea</taxon>
        <taxon>Methanobacteriati</taxon>
        <taxon>Methanobacteriota</taxon>
        <taxon>Stenosarchaea group</taxon>
        <taxon>Methanomicrobia</taxon>
        <taxon>Methanosarcinales</taxon>
        <taxon>Methanosarcinaceae</taxon>
        <taxon>Methanosarcina</taxon>
    </lineage>
</organism>
<protein>
    <recommendedName>
        <fullName evidence="1">NAD kinase</fullName>
        <ecNumber evidence="1">2.7.1.23</ecNumber>
    </recommendedName>
    <alternativeName>
        <fullName evidence="1">ATP-dependent NAD kinase</fullName>
    </alternativeName>
</protein>